<organismHost>
    <name type="scientific">Bos taurus</name>
    <name type="common">Bovine</name>
    <dbReference type="NCBI Taxonomy" id="9913"/>
</organismHost>
<protein>
    <recommendedName>
        <fullName>Major surface glycoprotein G</fullName>
    </recommendedName>
    <alternativeName>
        <fullName>Attachment glycoprotein G</fullName>
    </alternativeName>
    <alternativeName>
        <fullName>Membrane-bound glycoprotein</fullName>
        <shortName>mG</shortName>
    </alternativeName>
    <component>
        <recommendedName>
            <fullName evidence="2">Mature secreted glycoprotein G</fullName>
            <shortName evidence="2">Mature sG</shortName>
        </recommendedName>
    </component>
</protein>
<feature type="chain" id="PRO_0000142842" description="Major surface glycoprotein G">
    <location>
        <begin position="1"/>
        <end position="263"/>
    </location>
</feature>
<feature type="chain" id="PRO_0000451311" description="Mature secreted glycoprotein G">
    <location>
        <begin position="66"/>
        <end position="257"/>
    </location>
</feature>
<feature type="topological domain" description="Cytoplasmic" evidence="3">
    <location>
        <begin position="1"/>
        <end position="37"/>
    </location>
</feature>
<feature type="transmembrane region" description="Helical" evidence="3">
    <location>
        <begin position="38"/>
        <end position="66"/>
    </location>
</feature>
<feature type="topological domain" description="Extracellular" evidence="3">
    <location>
        <begin position="67"/>
        <end position="263"/>
    </location>
</feature>
<feature type="region of interest" description="Disordered" evidence="4">
    <location>
        <begin position="69"/>
        <end position="166"/>
    </location>
</feature>
<feature type="region of interest" description="Binding to host heparan sulfate" evidence="1">
    <location>
        <begin position="187"/>
        <end position="198"/>
    </location>
</feature>
<feature type="region of interest" description="Disordered" evidence="4">
    <location>
        <begin position="197"/>
        <end position="218"/>
    </location>
</feature>
<feature type="region of interest" description="Disordered" evidence="4">
    <location>
        <begin position="242"/>
        <end position="263"/>
    </location>
</feature>
<feature type="compositionally biased region" description="Low complexity" evidence="4">
    <location>
        <begin position="72"/>
        <end position="86"/>
    </location>
</feature>
<feature type="compositionally biased region" description="Polar residues" evidence="4">
    <location>
        <begin position="98"/>
        <end position="129"/>
    </location>
</feature>
<feature type="compositionally biased region" description="Polar residues" evidence="4">
    <location>
        <begin position="151"/>
        <end position="166"/>
    </location>
</feature>
<feature type="compositionally biased region" description="Basic residues" evidence="4">
    <location>
        <begin position="204"/>
        <end position="215"/>
    </location>
</feature>
<feature type="site" description="Cleavage" evidence="1">
    <location>
        <begin position="65"/>
        <end position="66"/>
    </location>
</feature>
<feature type="glycosylation site" description="O-linked (GalNAc...) threonine; by host" evidence="1">
    <location>
        <position position="72"/>
    </location>
</feature>
<feature type="glycosylation site" description="O-linked (GalNAc...) threonine; by host" evidence="1">
    <location>
        <position position="80"/>
    </location>
</feature>
<feature type="glycosylation site" description="O-linked (GalNAc...) threonine; by host" evidence="1">
    <location>
        <position position="87"/>
    </location>
</feature>
<feature type="glycosylation site" description="O-linked (GalNAc...) threonine; by host" evidence="1">
    <location>
        <position position="92"/>
    </location>
</feature>
<feature type="glycosylation site" description="O-linked (GalNAc...) serine; by host" evidence="3">
    <location>
        <position position="105"/>
    </location>
</feature>
<feature type="glycosylation site" description="N-linked (GlcNAc...) asparagine; by host" evidence="3">
    <location>
        <position position="127"/>
    </location>
</feature>
<feature type="glycosylation site" description="O-linked (GalNAc...) threonine; by host" evidence="3">
    <location>
        <position position="139"/>
    </location>
</feature>
<feature type="glycosylation site" description="N-linked (GlcNAc...) asparagine; by host" evidence="3">
    <location>
        <position position="163"/>
    </location>
</feature>
<feature type="glycosylation site" description="O-linked (GalNAc...) threonine; by host" evidence="3">
    <location>
        <position position="199"/>
    </location>
</feature>
<feature type="glycosylation site" description="O-linked (GalNAc...) threonine; by host" evidence="3">
    <location>
        <position position="215"/>
    </location>
</feature>
<feature type="glycosylation site" description="O-linked (GalNAc...) threonine; by host" evidence="3">
    <location>
        <position position="231"/>
    </location>
</feature>
<feature type="glycosylation site" description="N-linked (GlcNAc...) asparagine; by host" evidence="3">
    <location>
        <position position="251"/>
    </location>
</feature>
<feature type="glycosylation site" description="O-linked (GalNAc...) serine; by host" evidence="3">
    <location>
        <position position="253"/>
    </location>
</feature>
<feature type="disulfide bond" evidence="1">
    <location>
        <begin position="173"/>
        <end position="186"/>
    </location>
</feature>
<feature type="disulfide bond" evidence="1">
    <location>
        <begin position="176"/>
        <end position="182"/>
    </location>
</feature>
<feature type="splice variant" id="VSP_036510" description="In isoform Secreted glycoprotein G." evidence="1">
    <location>
        <begin position="1"/>
        <end position="47"/>
    </location>
</feature>
<evidence type="ECO:0000250" key="1">
    <source>
        <dbReference type="UniProtKB" id="P03423"/>
    </source>
</evidence>
<evidence type="ECO:0000250" key="2">
    <source>
        <dbReference type="UniProtKB" id="P20895"/>
    </source>
</evidence>
<evidence type="ECO:0000255" key="3"/>
<evidence type="ECO:0000256" key="4">
    <source>
        <dbReference type="SAM" id="MobiDB-lite"/>
    </source>
</evidence>
<evidence type="ECO:0000305" key="5"/>
<keyword id="KW-0024">Alternative initiation</keyword>
<keyword id="KW-1015">Disulfide bond</keyword>
<keyword id="KW-0325">Glycoprotein</keyword>
<keyword id="KW-1032">Host cell membrane</keyword>
<keyword id="KW-1043">Host membrane</keyword>
<keyword id="KW-0945">Host-virus interaction</keyword>
<keyword id="KW-0472">Membrane</keyword>
<keyword id="KW-0964">Secreted</keyword>
<keyword id="KW-0812">Transmembrane</keyword>
<keyword id="KW-1133">Transmembrane helix</keyword>
<keyword id="KW-1161">Viral attachment to host cell</keyword>
<keyword id="KW-0899">Viral immunoevasion</keyword>
<keyword id="KW-0946">Virion</keyword>
<keyword id="KW-1160">Virus entry into host cell</keyword>
<gene>
    <name type="primary">G</name>
</gene>
<sequence>MSNHTHHPKFKTLKRAWKASKYFIVGLSCLYKFNLKSLVQTALTTLAMITLTSLVITAIIYISVGNAKAKPTSKPTTQQTQQLQNHTPPPLTEHNYKSTHTSIQSTTLSQPPNIDTTSGTTYGHPTNRTQNRKIKSQSTPLATRKPPINPLGSNPPENHQDHNNSQTLPHVPCSTCEGNPACSPLCQIELERAPSSAPTITLKKAPKPKTTKKPTKTTIYHRTSPEAKLQTKKIMATPQQGILSSPEHQTNQSTTQISQHTSI</sequence>
<organism>
    <name type="scientific">Bovine respiratory syncytial virus (strain 127)</name>
    <name type="common">BRS</name>
    <dbReference type="NCBI Taxonomy" id="82818"/>
    <lineage>
        <taxon>Viruses</taxon>
        <taxon>Riboviria</taxon>
        <taxon>Orthornavirae</taxon>
        <taxon>Negarnaviricota</taxon>
        <taxon>Haploviricotina</taxon>
        <taxon>Monjiviricetes</taxon>
        <taxon>Mononegavirales</taxon>
        <taxon>Pneumoviridae</taxon>
        <taxon>Orthopneumovirus</taxon>
        <taxon>Orthopneumovirus bovis</taxon>
    </lineage>
</organism>
<accession>O10683</accession>
<comment type="function">
    <molecule>Isoform Membrane-bound glycoprotein G</molecule>
    <text evidence="1">Attaches the virion to the host cell membrane by interacting with heparan sulfate, initiating the infection. Unlike the other paramyxovirus attachment proteins, lacks both neuraminidase and hemagglutinating activities.</text>
</comment>
<comment type="function">
    <molecule>Isoform Secreted glycoprotein G</molecule>
    <text evidence="1">Helps the virus escape antibody-dependent restriction of replication by acting as an antigen decoy and by modulating the activity of leukocytes bearing Fc-gamma receptors.</text>
</comment>
<comment type="subunit">
    <molecule>Isoform Membrane-bound glycoprotein G</molecule>
    <text evidence="1">Homooligomer. Interacts (via N-terminus) with protein M. Part of a complex composed of F1, F2 and G glycoproteins. Interacts with protein SH. Interacts with host heparate sulfate; this interaction probably participates in the viral attachment to the host cell.</text>
</comment>
<comment type="subcellular location">
    <molecule>Isoform Membrane-bound glycoprotein G</molecule>
    <subcellularLocation>
        <location evidence="1">Virion membrane</location>
        <topology evidence="1">Single-pass type II membrane protein</topology>
    </subcellularLocation>
    <subcellularLocation>
        <location evidence="1">Host cell membrane</location>
        <topology evidence="1">Single-pass type II membrane protein</topology>
    </subcellularLocation>
</comment>
<comment type="subcellular location">
    <molecule>Isoform Secreted glycoprotein G</molecule>
    <subcellularLocation>
        <location evidence="2">Secreted</location>
    </subcellularLocation>
    <text evidence="2">The protein is shed from infected cells before the appearance of progeny virus. The initiation at the downstream methionine removes a portion of the transmembrane domain. The remaining hydrophobic portion of the sG protein is essential for translocating it into the lumen of the ER during translation and would likely maintain its membrane association until a proteolytic event releases the mature sG protein into the medium.</text>
</comment>
<comment type="alternative products">
    <event type="alternative initiation"/>
    <isoform>
        <id>O10683-1</id>
        <name>Membrane-bound glycoprotein G</name>
        <sequence type="displayed"/>
    </isoform>
    <isoform>
        <id>O10683-2</id>
        <name>Secreted glycoprotein G</name>
        <sequence type="described" ref="VSP_036510"/>
    </isoform>
</comment>
<comment type="domain">
    <molecule>Isoform Membrane-bound glycoprotein G</molecule>
    <text evidence="1">Contains a linear heparin binding domain essential for virus attachment to the host.</text>
</comment>
<comment type="PTM">
    <molecule>Isoform Secreted glycoprotein G</molecule>
    <text evidence="2">Cleaved to give rise to the mature sG protein which lacks the transmembrane domain.</text>
</comment>
<comment type="PTM">
    <molecule>Isoform Membrane-bound glycoprotein G</molecule>
    <text evidence="1">N- and O-glycosylated. May carry 30-40 separate O-linked carbohydrate chains distributed among the serine and threonine residues.</text>
</comment>
<comment type="PTM">
    <molecule>Isoform Membrane-bound glycoprotein G</molecule>
    <text evidence="1">Palmitoylated.</text>
</comment>
<comment type="similarity">
    <text evidence="5">Belongs to the pneumoviruses glycoprotein G family.</text>
</comment>
<reference key="1">
    <citation type="journal article" date="1997" name="Virology">
        <title>Antigenically distinct G glycoproteins of BRSV strains share a high degree of genetic homogeneity.</title>
        <authorList>
            <person name="Furze J."/>
            <person name="Roberts S."/>
            <person name="Wertz G."/>
            <person name="Taylor G."/>
        </authorList>
    </citation>
    <scope>NUCLEOTIDE SEQUENCE [MRNA]</scope>
</reference>
<dbReference type="EMBL" id="Y08716">
    <property type="protein sequence ID" value="CAA69966.1"/>
    <property type="molecule type" value="mRNA"/>
</dbReference>
<dbReference type="SMR" id="O10683"/>
<dbReference type="GlyCosmos" id="O10683">
    <property type="glycosylation" value="13 sites, No reported glycans"/>
</dbReference>
<dbReference type="GO" id="GO:0005576">
    <property type="term" value="C:extracellular region"/>
    <property type="evidence" value="ECO:0007669"/>
    <property type="project" value="UniProtKB-SubCell"/>
</dbReference>
<dbReference type="GO" id="GO:0020002">
    <property type="term" value="C:host cell plasma membrane"/>
    <property type="evidence" value="ECO:0007669"/>
    <property type="project" value="UniProtKB-SubCell"/>
</dbReference>
<dbReference type="GO" id="GO:0016020">
    <property type="term" value="C:membrane"/>
    <property type="evidence" value="ECO:0007669"/>
    <property type="project" value="UniProtKB-KW"/>
</dbReference>
<dbReference type="GO" id="GO:0055036">
    <property type="term" value="C:virion membrane"/>
    <property type="evidence" value="ECO:0007669"/>
    <property type="project" value="UniProtKB-SubCell"/>
</dbReference>
<dbReference type="GO" id="GO:0046718">
    <property type="term" value="P:symbiont entry into host cell"/>
    <property type="evidence" value="ECO:0007669"/>
    <property type="project" value="UniProtKB-KW"/>
</dbReference>
<dbReference type="GO" id="GO:0019062">
    <property type="term" value="P:virion attachment to host cell"/>
    <property type="evidence" value="ECO:0007669"/>
    <property type="project" value="UniProtKB-KW"/>
</dbReference>
<dbReference type="InterPro" id="IPR000925">
    <property type="entry name" value="G_prot"/>
</dbReference>
<dbReference type="Pfam" id="PF00802">
    <property type="entry name" value="Glycoprotein_G"/>
    <property type="match status" value="1"/>
</dbReference>
<name>GLYC_BRSV1</name>
<proteinExistence type="evidence at transcript level"/>